<feature type="chain" id="PRO_0000169738" description="L-methionine/branched-chain amino acid exporter YjeH">
    <location>
        <begin position="1"/>
        <end position="418"/>
    </location>
</feature>
<feature type="topological domain" description="Periplasmic" evidence="4">
    <location>
        <begin position="1"/>
        <end position="15"/>
    </location>
</feature>
<feature type="transmembrane region" description="Helical" evidence="1">
    <location>
        <begin position="16"/>
        <end position="36"/>
    </location>
</feature>
<feature type="topological domain" description="Cytoplasmic" evidence="4">
    <location>
        <begin position="37"/>
        <end position="41"/>
    </location>
</feature>
<feature type="transmembrane region" description="Helical" evidence="1">
    <location>
        <begin position="42"/>
        <end position="62"/>
    </location>
</feature>
<feature type="topological domain" description="Periplasmic" evidence="4">
    <location>
        <begin position="63"/>
        <end position="89"/>
    </location>
</feature>
<feature type="transmembrane region" description="Helical" evidence="1">
    <location>
        <begin position="90"/>
        <end position="110"/>
    </location>
</feature>
<feature type="topological domain" description="Cytoplasmic" evidence="4">
    <location>
        <begin position="111"/>
        <end position="113"/>
    </location>
</feature>
<feature type="transmembrane region" description="Helical" evidence="1">
    <location>
        <begin position="114"/>
        <end position="134"/>
    </location>
</feature>
<feature type="topological domain" description="Periplasmic" evidence="4">
    <location>
        <begin position="135"/>
        <end position="147"/>
    </location>
</feature>
<feature type="transmembrane region" description="Helical" evidence="1">
    <location>
        <begin position="148"/>
        <end position="168"/>
    </location>
</feature>
<feature type="topological domain" description="Cytoplasmic" evidence="4">
    <location>
        <begin position="169"/>
        <end position="182"/>
    </location>
</feature>
<feature type="transmembrane region" description="Helical" evidence="1">
    <location>
        <begin position="183"/>
        <end position="203"/>
    </location>
</feature>
<feature type="topological domain" description="Periplasmic" evidence="4">
    <location>
        <begin position="204"/>
        <end position="219"/>
    </location>
</feature>
<feature type="transmembrane region" description="Helical" evidence="1">
    <location>
        <begin position="220"/>
        <end position="240"/>
    </location>
</feature>
<feature type="topological domain" description="Cytoplasmic" evidence="4">
    <location>
        <begin position="241"/>
        <end position="257"/>
    </location>
</feature>
<feature type="transmembrane region" description="Helical" evidence="1">
    <location>
        <begin position="258"/>
        <end position="278"/>
    </location>
</feature>
<feature type="topological domain" description="Periplasmic" evidence="4">
    <location>
        <begin position="279"/>
        <end position="317"/>
    </location>
</feature>
<feature type="transmembrane region" description="Helical" evidence="1">
    <location>
        <begin position="318"/>
        <end position="338"/>
    </location>
</feature>
<feature type="topological domain" description="Cytoplasmic" evidence="4">
    <location>
        <begin position="339"/>
        <end position="341"/>
    </location>
</feature>
<feature type="transmembrane region" description="Helical" evidence="1">
    <location>
        <begin position="342"/>
        <end position="362"/>
    </location>
</feature>
<feature type="topological domain" description="Periplasmic" evidence="4">
    <location>
        <begin position="363"/>
        <end position="378"/>
    </location>
</feature>
<feature type="transmembrane region" description="Helical" evidence="1">
    <location>
        <begin position="379"/>
        <end position="399"/>
    </location>
</feature>
<feature type="topological domain" description="Cytoplasmic" evidence="2">
    <location>
        <begin position="400"/>
        <end position="418"/>
    </location>
</feature>
<feature type="mutagenesis site" description="Strong decrease in methionine efflux." evidence="3">
    <original>T</original>
    <variation>Y</variation>
    <location>
        <position position="24"/>
    </location>
</feature>
<feature type="mutagenesis site" description="Strong decrease in methionine efflux." evidence="3">
    <original>G</original>
    <variation>F</variation>
    <location>
        <position position="25"/>
    </location>
</feature>
<feature type="mutagenesis site" description="Strong decrease in methionine efflux." evidence="3">
    <original>W</original>
    <variation>A</variation>
    <location>
        <position position="195"/>
    </location>
</feature>
<organism>
    <name type="scientific">Escherichia coli (strain K12)</name>
    <dbReference type="NCBI Taxonomy" id="83333"/>
    <lineage>
        <taxon>Bacteria</taxon>
        <taxon>Pseudomonadati</taxon>
        <taxon>Pseudomonadota</taxon>
        <taxon>Gammaproteobacteria</taxon>
        <taxon>Enterobacterales</taxon>
        <taxon>Enterobacteriaceae</taxon>
        <taxon>Escherichia</taxon>
    </lineage>
</organism>
<comment type="function">
    <text evidence="3">Catalyzes the efflux of L-methionine, L-leucine, L-isoleucine and L-valine (PubMed:26319875). Activity is dependent on electrochemical potential (PubMed:26319875).</text>
</comment>
<comment type="catalytic activity">
    <reaction evidence="3">
        <text>L-methionine(in) + H(+)(out) = L-methionine(out) + H(+)(in)</text>
        <dbReference type="Rhea" id="RHEA:73267"/>
        <dbReference type="ChEBI" id="CHEBI:15378"/>
        <dbReference type="ChEBI" id="CHEBI:57844"/>
    </reaction>
    <physiologicalReaction direction="left-to-right" evidence="3">
        <dbReference type="Rhea" id="RHEA:73268"/>
    </physiologicalReaction>
</comment>
<comment type="catalytic activity">
    <reaction evidence="3">
        <text>L-leucine(in) + H(+)(out) = L-leucine(out) + H(+)(in)</text>
        <dbReference type="Rhea" id="RHEA:28731"/>
        <dbReference type="ChEBI" id="CHEBI:15378"/>
        <dbReference type="ChEBI" id="CHEBI:57427"/>
    </reaction>
    <physiologicalReaction direction="left-to-right" evidence="3">
        <dbReference type="Rhea" id="RHEA:28732"/>
    </physiologicalReaction>
</comment>
<comment type="catalytic activity">
    <reaction evidence="3">
        <text>L-isoleucine(in) + H(+)(out) = L-isoleucine(out) + H(+)(in)</text>
        <dbReference type="Rhea" id="RHEA:73283"/>
        <dbReference type="ChEBI" id="CHEBI:15378"/>
        <dbReference type="ChEBI" id="CHEBI:58045"/>
    </reaction>
    <physiologicalReaction direction="left-to-right" evidence="3">
        <dbReference type="Rhea" id="RHEA:73284"/>
    </physiologicalReaction>
</comment>
<comment type="catalytic activity">
    <reaction evidence="3">
        <text>L-valine(in) + H(+)(out) = L-valine(out) + H(+)(in)</text>
        <dbReference type="Rhea" id="RHEA:73291"/>
        <dbReference type="ChEBI" id="CHEBI:15378"/>
        <dbReference type="ChEBI" id="CHEBI:57762"/>
    </reaction>
    <physiologicalReaction direction="left-to-right" evidence="3">
        <dbReference type="Rhea" id="RHEA:73292"/>
    </physiologicalReaction>
</comment>
<comment type="activity regulation">
    <text evidence="3">Efflux of L-methionine is inhibited by the proton ionophore carbonyl cyanide m-chlorophenylhydrazone (CCCP).</text>
</comment>
<comment type="subcellular location">
    <subcellularLocation>
        <location evidence="2 3">Cell inner membrane</location>
        <topology evidence="1">Multi-pass membrane protein</topology>
    </subcellularLocation>
</comment>
<comment type="induction">
    <text evidence="3">Induced in the presence of intracellular L-methionine, L-leucine or L-isoleucine.</text>
</comment>
<comment type="disruption phenotype">
    <text evidence="3">Deletion increases the susceptibility to DL-ethionine, DL-norleucine and DL-norvaline. Deletion also results in intracellular accumulation and a reduced rate of export of methionine in the presence of extracellular Met-Met dipeptides.</text>
</comment>
<comment type="similarity">
    <text evidence="4">Belongs to the amino acid-polyamine-organocation (APC) superfamily. Amino acid efflux (AAE) (TC 2.A.3.13) family.</text>
</comment>
<proteinExistence type="evidence at protein level"/>
<evidence type="ECO:0000255" key="1"/>
<evidence type="ECO:0000269" key="2">
    <source>
    </source>
</evidence>
<evidence type="ECO:0000269" key="3">
    <source>
    </source>
</evidence>
<evidence type="ECO:0000305" key="4"/>
<protein>
    <recommendedName>
        <fullName evidence="4">L-methionine/branched-chain amino acid exporter YjeH</fullName>
    </recommendedName>
</protein>
<sequence length="418" mass="44778">MSGLKQELGLAQGIGLLSTSLLGTGVFAVPALAALVAGNNSLWAWPVLIILVFPIAIVFAILGRHYPSAGGVAHFVGMAFGSRLERVTGWLFLSVIPVGLPAALQIAAGFGQAMFGWHSWQLLLAELGTLALVWYIGTRGASSSANLQTVIAGLIVALIVAIWWAGDIKPANIPFPAPGNIELTGLFAALSVMFWCFVGLEAFAHLASEFKNPERDFPRALMIGLLLAGLVYWGCTVVVLHFDAYGEKMAAAASLPKIVVQLFGVGALWIACVIGYLACFASLNIYIQSFARLVWSQAQHNPDHYLARLSSRHIPNNALNAVLGCCVVSTLVIHALEINLDALIIYANGIFIMIYLLCMLAGCKLLQGRYRLLAVVGGLLCVLLLAMVGWKSLYALIMLAGLWLLLPKRKTPENGITT</sequence>
<keyword id="KW-0029">Amino-acid transport</keyword>
<keyword id="KW-0050">Antiport</keyword>
<keyword id="KW-0997">Cell inner membrane</keyword>
<keyword id="KW-1003">Cell membrane</keyword>
<keyword id="KW-0472">Membrane</keyword>
<keyword id="KW-1185">Reference proteome</keyword>
<keyword id="KW-0812">Transmembrane</keyword>
<keyword id="KW-1133">Transmembrane helix</keyword>
<keyword id="KW-0813">Transport</keyword>
<name>YJEH_ECOLI</name>
<gene>
    <name type="primary">yjeH</name>
    <name type="ordered locus">b4141</name>
    <name type="ordered locus">JW4101</name>
</gene>
<accession>P39277</accession>
<accession>Q2M6G3</accession>
<reference key="1">
    <citation type="journal article" date="1995" name="Nucleic Acids Res.">
        <title>Analysis of the Escherichia coli genome VI: DNA sequence of the region from 92.8 through 100 minutes.</title>
        <authorList>
            <person name="Burland V.D."/>
            <person name="Plunkett G. III"/>
            <person name="Sofia H.J."/>
            <person name="Daniels D.L."/>
            <person name="Blattner F.R."/>
        </authorList>
    </citation>
    <scope>NUCLEOTIDE SEQUENCE [LARGE SCALE GENOMIC DNA]</scope>
    <source>
        <strain>K12 / MG1655 / ATCC 47076</strain>
    </source>
</reference>
<reference key="2">
    <citation type="journal article" date="1997" name="Science">
        <title>The complete genome sequence of Escherichia coli K-12.</title>
        <authorList>
            <person name="Blattner F.R."/>
            <person name="Plunkett G. III"/>
            <person name="Bloch C.A."/>
            <person name="Perna N.T."/>
            <person name="Burland V."/>
            <person name="Riley M."/>
            <person name="Collado-Vides J."/>
            <person name="Glasner J.D."/>
            <person name="Rode C.K."/>
            <person name="Mayhew G.F."/>
            <person name="Gregor J."/>
            <person name="Davis N.W."/>
            <person name="Kirkpatrick H.A."/>
            <person name="Goeden M.A."/>
            <person name="Rose D.J."/>
            <person name="Mau B."/>
            <person name="Shao Y."/>
        </authorList>
    </citation>
    <scope>NUCLEOTIDE SEQUENCE [LARGE SCALE GENOMIC DNA]</scope>
    <source>
        <strain>K12 / MG1655 / ATCC 47076</strain>
    </source>
</reference>
<reference key="3">
    <citation type="journal article" date="2006" name="Mol. Syst. Biol.">
        <title>Highly accurate genome sequences of Escherichia coli K-12 strains MG1655 and W3110.</title>
        <authorList>
            <person name="Hayashi K."/>
            <person name="Morooka N."/>
            <person name="Yamamoto Y."/>
            <person name="Fujita K."/>
            <person name="Isono K."/>
            <person name="Choi S."/>
            <person name="Ohtsubo E."/>
            <person name="Baba T."/>
            <person name="Wanner B.L."/>
            <person name="Mori H."/>
            <person name="Horiuchi T."/>
        </authorList>
    </citation>
    <scope>NUCLEOTIDE SEQUENCE [LARGE SCALE GENOMIC DNA]</scope>
    <source>
        <strain>K12 / W3110 / ATCC 27325 / DSM 5911</strain>
    </source>
</reference>
<reference key="4">
    <citation type="journal article" date="2005" name="Science">
        <title>Global topology analysis of the Escherichia coli inner membrane proteome.</title>
        <authorList>
            <person name="Daley D.O."/>
            <person name="Rapp M."/>
            <person name="Granseth E."/>
            <person name="Melen K."/>
            <person name="Drew D."/>
            <person name="von Heijne G."/>
        </authorList>
    </citation>
    <scope>TOPOLOGY [LARGE SCALE ANALYSIS]</scope>
    <scope>SUBCELLULAR LOCATION</scope>
    <source>
        <strain>K12 / MG1655 / ATCC 47076</strain>
    </source>
</reference>
<reference key="5">
    <citation type="journal article" date="2015" name="Appl. Environ. Microbiol.">
        <title>YjeH is a novel exporter of L-methionine and branched-chain amino acids in Escherichia coli.</title>
        <authorList>
            <person name="Liu Q."/>
            <person name="Liang Y."/>
            <person name="Zhang Y."/>
            <person name="Shang X."/>
            <person name="Liu S."/>
            <person name="Wen J."/>
            <person name="Wen T."/>
        </authorList>
    </citation>
    <scope>FUNCTION</scope>
    <scope>CATALYTIC ACTIVITY</scope>
    <scope>ACTIVITY REGULATION</scope>
    <scope>SUBCELLULAR LOCATION</scope>
    <scope>INDUCTION</scope>
    <scope>DISRUPTION PHENOTYPE</scope>
    <scope>MUTAGENESIS OF THR-24; GLY-25 AND TRP-195</scope>
    <source>
        <strain>K12 / W3110 / ATCC 27325 / DSM 5911</strain>
    </source>
</reference>
<dbReference type="EMBL" id="U14003">
    <property type="protein sequence ID" value="AAA97040.1"/>
    <property type="molecule type" value="Genomic_DNA"/>
</dbReference>
<dbReference type="EMBL" id="U00096">
    <property type="protein sequence ID" value="AAC77101.1"/>
    <property type="molecule type" value="Genomic_DNA"/>
</dbReference>
<dbReference type="EMBL" id="AP009048">
    <property type="protein sequence ID" value="BAE78143.1"/>
    <property type="molecule type" value="Genomic_DNA"/>
</dbReference>
<dbReference type="PIR" id="S56369">
    <property type="entry name" value="S56369"/>
</dbReference>
<dbReference type="RefSeq" id="NP_418565.1">
    <property type="nucleotide sequence ID" value="NC_000913.3"/>
</dbReference>
<dbReference type="RefSeq" id="WP_000015837.1">
    <property type="nucleotide sequence ID" value="NZ_STEB01000014.1"/>
</dbReference>
<dbReference type="SMR" id="P39277"/>
<dbReference type="BioGRID" id="4262197">
    <property type="interactions" value="13"/>
</dbReference>
<dbReference type="BioGRID" id="852948">
    <property type="interactions" value="1"/>
</dbReference>
<dbReference type="DIP" id="DIP-12573N"/>
<dbReference type="FunCoup" id="P39277">
    <property type="interactions" value="57"/>
</dbReference>
<dbReference type="IntAct" id="P39277">
    <property type="interactions" value="4"/>
</dbReference>
<dbReference type="STRING" id="511145.b4141"/>
<dbReference type="TCDB" id="2.A.3.13.1">
    <property type="family name" value="the amino acid-polyamine-organocation (apc) family"/>
</dbReference>
<dbReference type="PaxDb" id="511145-b4141"/>
<dbReference type="EnsemblBacteria" id="AAC77101">
    <property type="protein sequence ID" value="AAC77101"/>
    <property type="gene ID" value="b4141"/>
</dbReference>
<dbReference type="GeneID" id="75203976"/>
<dbReference type="GeneID" id="948656"/>
<dbReference type="KEGG" id="ecj:JW4101"/>
<dbReference type="KEGG" id="eco:b4141"/>
<dbReference type="KEGG" id="ecoc:C3026_22380"/>
<dbReference type="PATRIC" id="fig|1411691.4.peg.2559"/>
<dbReference type="EchoBASE" id="EB2363"/>
<dbReference type="eggNOG" id="COG0531">
    <property type="taxonomic scope" value="Bacteria"/>
</dbReference>
<dbReference type="HOGENOM" id="CLU_007946_18_0_6"/>
<dbReference type="InParanoid" id="P39277"/>
<dbReference type="OMA" id="PQRDFPI"/>
<dbReference type="OrthoDB" id="9117841at2"/>
<dbReference type="PhylomeDB" id="P39277"/>
<dbReference type="BioCyc" id="EcoCyc:B4141-MONOMER"/>
<dbReference type="BioCyc" id="MetaCyc:B4141-MONOMER"/>
<dbReference type="PRO" id="PR:P39277"/>
<dbReference type="Proteomes" id="UP000000625">
    <property type="component" value="Chromosome"/>
</dbReference>
<dbReference type="GO" id="GO:0005886">
    <property type="term" value="C:plasma membrane"/>
    <property type="evidence" value="ECO:0000314"/>
    <property type="project" value="EcoCyc"/>
</dbReference>
<dbReference type="GO" id="GO:0015297">
    <property type="term" value="F:antiporter activity"/>
    <property type="evidence" value="ECO:0007669"/>
    <property type="project" value="UniProtKB-KW"/>
</dbReference>
<dbReference type="GO" id="GO:0000102">
    <property type="term" value="F:L-methionine secondary active transmembrane transporter activity"/>
    <property type="evidence" value="ECO:0000314"/>
    <property type="project" value="EcoCyc"/>
</dbReference>
<dbReference type="GO" id="GO:0005294">
    <property type="term" value="F:neutral L-amino acid secondary active transmembrane transporter activity"/>
    <property type="evidence" value="ECO:0000314"/>
    <property type="project" value="EcoCyc"/>
</dbReference>
<dbReference type="GO" id="GO:0071230">
    <property type="term" value="P:cellular response to amino acid stimulus"/>
    <property type="evidence" value="ECO:0000270"/>
    <property type="project" value="EcoCyc"/>
</dbReference>
<dbReference type="GO" id="GO:1903714">
    <property type="term" value="P:isoleucine transmembrane transport"/>
    <property type="evidence" value="ECO:0000315"/>
    <property type="project" value="EcoCyc"/>
</dbReference>
<dbReference type="GO" id="GO:0015820">
    <property type="term" value="P:L-leucine transport"/>
    <property type="evidence" value="ECO:0000315"/>
    <property type="project" value="EcoCyc"/>
</dbReference>
<dbReference type="GO" id="GO:1903785">
    <property type="term" value="P:L-valine transmembrane transport"/>
    <property type="evidence" value="ECO:0000315"/>
    <property type="project" value="EcoCyc"/>
</dbReference>
<dbReference type="GO" id="GO:0015821">
    <property type="term" value="P:methionine transport"/>
    <property type="evidence" value="ECO:0000315"/>
    <property type="project" value="EcoCyc"/>
</dbReference>
<dbReference type="FunFam" id="1.20.1740.10:FF:000044">
    <property type="entry name" value="Amino acid permease"/>
    <property type="match status" value="1"/>
</dbReference>
<dbReference type="Gene3D" id="1.20.1740.10">
    <property type="entry name" value="Amino acid/polyamine transporter I"/>
    <property type="match status" value="1"/>
</dbReference>
<dbReference type="InterPro" id="IPR002293">
    <property type="entry name" value="AA/rel_permease1"/>
</dbReference>
<dbReference type="InterPro" id="IPR050367">
    <property type="entry name" value="APC_superfamily"/>
</dbReference>
<dbReference type="NCBIfam" id="NF008245">
    <property type="entry name" value="PRK11021.1"/>
    <property type="match status" value="1"/>
</dbReference>
<dbReference type="PANTHER" id="PTHR42770">
    <property type="entry name" value="AMINO ACID TRANSPORTER-RELATED"/>
    <property type="match status" value="1"/>
</dbReference>
<dbReference type="PANTHER" id="PTHR42770:SF13">
    <property type="entry name" value="L-METHIONINE_BRANCHED-CHAIN AMINO ACID EXPORTER YJEH"/>
    <property type="match status" value="1"/>
</dbReference>
<dbReference type="Pfam" id="PF13520">
    <property type="entry name" value="AA_permease_2"/>
    <property type="match status" value="1"/>
</dbReference>
<dbReference type="PIRSF" id="PIRSF006060">
    <property type="entry name" value="AA_transporter"/>
    <property type="match status" value="1"/>
</dbReference>